<reference key="1">
    <citation type="journal article" date="2005" name="Proc. Natl. Acad. Sci. U.S.A.">
        <title>Complete genome sequence of the probiotic lactic acid bacterium Lactobacillus acidophilus NCFM.</title>
        <authorList>
            <person name="Altermann E."/>
            <person name="Russell W.M."/>
            <person name="Azcarate-Peril M.A."/>
            <person name="Barrangou R."/>
            <person name="Buck B.L."/>
            <person name="McAuliffe O."/>
            <person name="Souther N."/>
            <person name="Dobson A."/>
            <person name="Duong T."/>
            <person name="Callanan M."/>
            <person name="Lick S."/>
            <person name="Hamrick A."/>
            <person name="Cano R."/>
            <person name="Klaenhammer T.R."/>
        </authorList>
    </citation>
    <scope>NUCLEOTIDE SEQUENCE [LARGE SCALE GENOMIC DNA]</scope>
    <source>
        <strain>ATCC 700396 / NCK56 / N2 / NCFM</strain>
    </source>
</reference>
<keyword id="KW-1003">Cell membrane</keyword>
<keyword id="KW-0378">Hydrolase</keyword>
<keyword id="KW-0472">Membrane</keyword>
<keyword id="KW-0479">Metal-binding</keyword>
<keyword id="KW-0482">Metalloprotease</keyword>
<keyword id="KW-0645">Protease</keyword>
<keyword id="KW-1185">Reference proteome</keyword>
<keyword id="KW-0812">Transmembrane</keyword>
<keyword id="KW-1133">Transmembrane helix</keyword>
<keyword id="KW-0862">Zinc</keyword>
<organism>
    <name type="scientific">Lactobacillus acidophilus (strain ATCC 700396 / NCK56 / N2 / NCFM)</name>
    <dbReference type="NCBI Taxonomy" id="272621"/>
    <lineage>
        <taxon>Bacteria</taxon>
        <taxon>Bacillati</taxon>
        <taxon>Bacillota</taxon>
        <taxon>Bacilli</taxon>
        <taxon>Lactobacillales</taxon>
        <taxon>Lactobacillaceae</taxon>
        <taxon>Lactobacillus</taxon>
    </lineage>
</organism>
<dbReference type="EC" id="3.4.24.-" evidence="1"/>
<dbReference type="EMBL" id="CP000033">
    <property type="protein sequence ID" value="AAV41997.1"/>
    <property type="molecule type" value="Genomic_DNA"/>
</dbReference>
<dbReference type="RefSeq" id="WP_011254032.1">
    <property type="nucleotide sequence ID" value="NC_006814.3"/>
</dbReference>
<dbReference type="RefSeq" id="YP_193028.1">
    <property type="nucleotide sequence ID" value="NC_006814.3"/>
</dbReference>
<dbReference type="SMR" id="Q5FMS7"/>
<dbReference type="STRING" id="272621.LBA0096"/>
<dbReference type="GeneID" id="93290791"/>
<dbReference type="KEGG" id="lac:LBA0096"/>
<dbReference type="PATRIC" id="fig|272621.13.peg.92"/>
<dbReference type="eggNOG" id="COG0501">
    <property type="taxonomic scope" value="Bacteria"/>
</dbReference>
<dbReference type="HOGENOM" id="CLU_042266_2_1_9"/>
<dbReference type="OrthoDB" id="15218at2"/>
<dbReference type="BioCyc" id="LACI272621:G1G49-96-MONOMER"/>
<dbReference type="Proteomes" id="UP000006381">
    <property type="component" value="Chromosome"/>
</dbReference>
<dbReference type="GO" id="GO:0005886">
    <property type="term" value="C:plasma membrane"/>
    <property type="evidence" value="ECO:0007669"/>
    <property type="project" value="UniProtKB-SubCell"/>
</dbReference>
<dbReference type="GO" id="GO:0004222">
    <property type="term" value="F:metalloendopeptidase activity"/>
    <property type="evidence" value="ECO:0007669"/>
    <property type="project" value="UniProtKB-UniRule"/>
</dbReference>
<dbReference type="GO" id="GO:0008270">
    <property type="term" value="F:zinc ion binding"/>
    <property type="evidence" value="ECO:0007669"/>
    <property type="project" value="UniProtKB-UniRule"/>
</dbReference>
<dbReference type="GO" id="GO:0006508">
    <property type="term" value="P:proteolysis"/>
    <property type="evidence" value="ECO:0007669"/>
    <property type="project" value="UniProtKB-KW"/>
</dbReference>
<dbReference type="CDD" id="cd07340">
    <property type="entry name" value="M48B_Htpx_like"/>
    <property type="match status" value="1"/>
</dbReference>
<dbReference type="Gene3D" id="3.30.2010.10">
    <property type="entry name" value="Metalloproteases ('zincins'), catalytic domain"/>
    <property type="match status" value="1"/>
</dbReference>
<dbReference type="HAMAP" id="MF_00188">
    <property type="entry name" value="Pept_M48_protease_HtpX"/>
    <property type="match status" value="1"/>
</dbReference>
<dbReference type="InterPro" id="IPR050083">
    <property type="entry name" value="HtpX_protease"/>
</dbReference>
<dbReference type="InterPro" id="IPR022919">
    <property type="entry name" value="Pept_M48_protease_HtpX"/>
</dbReference>
<dbReference type="InterPro" id="IPR001915">
    <property type="entry name" value="Peptidase_M48"/>
</dbReference>
<dbReference type="NCBIfam" id="NF003425">
    <property type="entry name" value="PRK04897.1"/>
    <property type="match status" value="1"/>
</dbReference>
<dbReference type="PANTHER" id="PTHR43221">
    <property type="entry name" value="PROTEASE HTPX"/>
    <property type="match status" value="1"/>
</dbReference>
<dbReference type="PANTHER" id="PTHR43221:SF1">
    <property type="entry name" value="PROTEASE HTPX"/>
    <property type="match status" value="1"/>
</dbReference>
<dbReference type="Pfam" id="PF01435">
    <property type="entry name" value="Peptidase_M48"/>
    <property type="match status" value="1"/>
</dbReference>
<gene>
    <name evidence="1" type="primary">htpX</name>
    <name type="ordered locus">LBA0096</name>
</gene>
<evidence type="ECO:0000255" key="1">
    <source>
        <dbReference type="HAMAP-Rule" id="MF_00188"/>
    </source>
</evidence>
<feature type="chain" id="PRO_1000020877" description="Protease HtpX homolog">
    <location>
        <begin position="1"/>
        <end position="298"/>
    </location>
</feature>
<feature type="transmembrane region" description="Helical" evidence="1">
    <location>
        <begin position="15"/>
        <end position="35"/>
    </location>
</feature>
<feature type="transmembrane region" description="Helical" evidence="1">
    <location>
        <begin position="38"/>
        <end position="58"/>
    </location>
</feature>
<feature type="transmembrane region" description="Helical" evidence="1">
    <location>
        <begin position="153"/>
        <end position="173"/>
    </location>
</feature>
<feature type="transmembrane region" description="Helical" evidence="1">
    <location>
        <begin position="197"/>
        <end position="217"/>
    </location>
</feature>
<feature type="active site" evidence="1">
    <location>
        <position position="144"/>
    </location>
</feature>
<feature type="binding site" evidence="1">
    <location>
        <position position="143"/>
    </location>
    <ligand>
        <name>Zn(2+)</name>
        <dbReference type="ChEBI" id="CHEBI:29105"/>
        <note>catalytic</note>
    </ligand>
</feature>
<feature type="binding site" evidence="1">
    <location>
        <position position="147"/>
    </location>
    <ligand>
        <name>Zn(2+)</name>
        <dbReference type="ChEBI" id="CHEBI:29105"/>
        <note>catalytic</note>
    </ligand>
</feature>
<feature type="binding site" evidence="1">
    <location>
        <position position="227"/>
    </location>
    <ligand>
        <name>Zn(2+)</name>
        <dbReference type="ChEBI" id="CHEBI:29105"/>
        <note>catalytic</note>
    </ligand>
</feature>
<name>HTPX_LACAC</name>
<protein>
    <recommendedName>
        <fullName evidence="1">Protease HtpX homolog</fullName>
        <ecNumber evidence="1">3.4.24.-</ecNumber>
    </recommendedName>
</protein>
<accession>Q5FMS7</accession>
<comment type="cofactor">
    <cofactor evidence="1">
        <name>Zn(2+)</name>
        <dbReference type="ChEBI" id="CHEBI:29105"/>
    </cofactor>
    <text evidence="1">Binds 1 zinc ion per subunit.</text>
</comment>
<comment type="subcellular location">
    <subcellularLocation>
        <location evidence="1">Cell membrane</location>
        <topology evidence="1">Multi-pass membrane protein</topology>
    </subcellularLocation>
</comment>
<comment type="similarity">
    <text evidence="1">Belongs to the peptidase M48B family.</text>
</comment>
<sequence>MLYQQIARNKRKTALIMVLFVVILTLVGAGLGYLFSNSPWTGIIIALAGSLIYLLIMWQNPANMIMSLNHAQEIQEADNPELWHIVEDMAMVARVPMPRVFIIPDPSPNAFATGRDPEHSAVAVTQGILELMNREELEGVLGHELSHVRNYDILLSTIGVVLVGVISFISGIASRYIWFFGGNRRDDEDRDTNAFEIIFKVIAIVFVLILGPISASLAQMALSRNREYLADASSVELTRNPQGLISALRKIEGSQPMRQADRSSAGLYIENPFHNHGLSHLFDTHPPTEDRIKRLEHM</sequence>
<proteinExistence type="inferred from homology"/>